<protein>
    <recommendedName>
        <fullName>Probable inositol transporter 3</fullName>
    </recommendedName>
</protein>
<dbReference type="EMBL" id="AJ973177">
    <property type="protein sequence ID" value="CAJ00305.1"/>
    <property type="molecule type" value="mRNA"/>
</dbReference>
<dbReference type="EMBL" id="AM778029">
    <property type="protein sequence ID" value="CAO82752.1"/>
    <property type="molecule type" value="mRNA"/>
</dbReference>
<dbReference type="EMBL" id="AC006068">
    <property type="protein sequence ID" value="AAD15441.1"/>
    <property type="molecule type" value="Genomic_DNA"/>
</dbReference>
<dbReference type="EMBL" id="CP002685">
    <property type="protein sequence ID" value="AEC09155.1"/>
    <property type="molecule type" value="Genomic_DNA"/>
</dbReference>
<dbReference type="PIR" id="D84772">
    <property type="entry name" value="D84772"/>
</dbReference>
<dbReference type="RefSeq" id="NP_181117.1">
    <molecule id="Q9ZQP6-1"/>
    <property type="nucleotide sequence ID" value="NM_129132.2"/>
</dbReference>
<dbReference type="SMR" id="Q9ZQP6"/>
<dbReference type="FunCoup" id="Q9ZQP6">
    <property type="interactions" value="1166"/>
</dbReference>
<dbReference type="STRING" id="3702.Q9ZQP6"/>
<dbReference type="PaxDb" id="3702-AT2G35740.1"/>
<dbReference type="EnsemblPlants" id="AT2G35740.1">
    <molecule id="Q9ZQP6-1"/>
    <property type="protein sequence ID" value="AT2G35740.1"/>
    <property type="gene ID" value="AT2G35740"/>
</dbReference>
<dbReference type="GeneID" id="818146"/>
<dbReference type="Gramene" id="AT2G35740.1">
    <molecule id="Q9ZQP6-1"/>
    <property type="protein sequence ID" value="AT2G35740.1"/>
    <property type="gene ID" value="AT2G35740"/>
</dbReference>
<dbReference type="KEGG" id="ath:AT2G35740"/>
<dbReference type="Araport" id="AT2G35740"/>
<dbReference type="TAIR" id="AT2G35740">
    <property type="gene designation" value="INT3"/>
</dbReference>
<dbReference type="eggNOG" id="KOG0254">
    <property type="taxonomic scope" value="Eukaryota"/>
</dbReference>
<dbReference type="HOGENOM" id="CLU_001265_30_5_1"/>
<dbReference type="InParanoid" id="Q9ZQP6"/>
<dbReference type="OMA" id="TAPLNRW"/>
<dbReference type="PhylomeDB" id="Q9ZQP6"/>
<dbReference type="PRO" id="PR:Q9ZQP6"/>
<dbReference type="Proteomes" id="UP000006548">
    <property type="component" value="Chromosome 2"/>
</dbReference>
<dbReference type="ExpressionAtlas" id="Q9ZQP6">
    <property type="expression patterns" value="differential"/>
</dbReference>
<dbReference type="GO" id="GO:0016020">
    <property type="term" value="C:membrane"/>
    <property type="evidence" value="ECO:0007669"/>
    <property type="project" value="UniProtKB-SubCell"/>
</dbReference>
<dbReference type="GO" id="GO:0015293">
    <property type="term" value="F:symporter activity"/>
    <property type="evidence" value="ECO:0007669"/>
    <property type="project" value="UniProtKB-KW"/>
</dbReference>
<dbReference type="CDD" id="cd17360">
    <property type="entry name" value="MFS_HMIT_like"/>
    <property type="match status" value="1"/>
</dbReference>
<dbReference type="FunFam" id="1.20.1250.20:FF:000121">
    <property type="entry name" value="Probable inositol transporter 2"/>
    <property type="match status" value="1"/>
</dbReference>
<dbReference type="FunFam" id="1.20.1250.20:FF:000137">
    <property type="entry name" value="Probable inositol transporter 2"/>
    <property type="match status" value="1"/>
</dbReference>
<dbReference type="Gene3D" id="1.20.1250.20">
    <property type="entry name" value="MFS general substrate transporter like domains"/>
    <property type="match status" value="2"/>
</dbReference>
<dbReference type="InterPro" id="IPR020846">
    <property type="entry name" value="MFS_dom"/>
</dbReference>
<dbReference type="InterPro" id="IPR005828">
    <property type="entry name" value="MFS_sugar_transport-like"/>
</dbReference>
<dbReference type="InterPro" id="IPR036259">
    <property type="entry name" value="MFS_trans_sf"/>
</dbReference>
<dbReference type="InterPro" id="IPR050814">
    <property type="entry name" value="Myo-inositol_Transporter"/>
</dbReference>
<dbReference type="InterPro" id="IPR003663">
    <property type="entry name" value="Sugar/inositol_transpt"/>
</dbReference>
<dbReference type="InterPro" id="IPR005829">
    <property type="entry name" value="Sugar_transporter_CS"/>
</dbReference>
<dbReference type="NCBIfam" id="TIGR00879">
    <property type="entry name" value="SP"/>
    <property type="match status" value="1"/>
</dbReference>
<dbReference type="PANTHER" id="PTHR48020:SF6">
    <property type="entry name" value="INOSITOL TRANSPORTER 3-RELATED"/>
    <property type="match status" value="1"/>
</dbReference>
<dbReference type="PANTHER" id="PTHR48020">
    <property type="entry name" value="PROTON MYO-INOSITOL COTRANSPORTER"/>
    <property type="match status" value="1"/>
</dbReference>
<dbReference type="Pfam" id="PF00083">
    <property type="entry name" value="Sugar_tr"/>
    <property type="match status" value="2"/>
</dbReference>
<dbReference type="PRINTS" id="PR00171">
    <property type="entry name" value="SUGRTRNSPORT"/>
</dbReference>
<dbReference type="SUPFAM" id="SSF103473">
    <property type="entry name" value="MFS general substrate transporter"/>
    <property type="match status" value="1"/>
</dbReference>
<dbReference type="PROSITE" id="PS50850">
    <property type="entry name" value="MFS"/>
    <property type="match status" value="1"/>
</dbReference>
<dbReference type="PROSITE" id="PS00216">
    <property type="entry name" value="SUGAR_TRANSPORT_1"/>
    <property type="match status" value="1"/>
</dbReference>
<dbReference type="PROSITE" id="PS00217">
    <property type="entry name" value="SUGAR_TRANSPORT_2"/>
    <property type="match status" value="1"/>
</dbReference>
<gene>
    <name type="primary">INT3</name>
    <name type="ordered locus">At2g35740</name>
    <name type="ORF">T20F21.7</name>
</gene>
<sequence length="580" mass="63172">MVEEASKSEQINITEVWTTTWETPYIMRLALSAGIGGLLFGYNTGVIAGALLYIKEEFGEVDNKTWLQEIIVSMTVAGAIVGAAIGGWYNDKFGRRMSVLIADVLFLLGALVMVIAHAPWVIILGRLLVGFGVGMASMTSPLYISEMSPARIRGALVSTNGLLITGGQFLSYLINLAFVHTPGTWRWMLGVSAIPAIIQFCLMLTLPESPRWLYRNDRKAESRDILERIYPAEMVEAEIAALKESVRAETADEDIIGHTFSDKLRGALSNPVVRHGLAAGITVQVAQQFVGINTVMYYSPTILQFAGYASNKTAMALALITSGLNAVGSVVSMMFVDRYGRRKLMIISMFGIITCLVILAAVFNEASNHAPKIDKRDSRNFAKNATCPAFAPFTASRSPPSNWNCMKCLQYDCGFCSNGAQEYAPGACIVQSADMKALCHSKGRTFFKDGCPSKFGYLAIVFLGLYIIVYAPGMGTVPWIVNSEIYPLRYRGLAGGIAAVSNWMSNLVVSETFLTLTNAVGSSGTFLLFAGSSAVGLFFIWLLVPETKGLQFEEVEKLLEGGFRPSLLRPTTKENQVETP</sequence>
<evidence type="ECO:0000250" key="1"/>
<evidence type="ECO:0000255" key="2"/>
<evidence type="ECO:0000269" key="3">
    <source>
    </source>
</evidence>
<evidence type="ECO:0000303" key="4">
    <source>
    </source>
</evidence>
<evidence type="ECO:0000305" key="5"/>
<keyword id="KW-0025">Alternative splicing</keyword>
<keyword id="KW-0472">Membrane</keyword>
<keyword id="KW-1185">Reference proteome</keyword>
<keyword id="KW-0769">Symport</keyword>
<keyword id="KW-0812">Transmembrane</keyword>
<keyword id="KW-1133">Transmembrane helix</keyword>
<keyword id="KW-0813">Transport</keyword>
<proteinExistence type="evidence at transcript level"/>
<reference key="1">
    <citation type="journal article" date="2006" name="Plant Physiol.">
        <title>Arabidopsis INOSITOL TRANSPORTER4 mediates high-affinity H+ symport of myoinositol across the plasma membrane.</title>
        <authorList>
            <person name="Schneider S."/>
            <person name="Schneidereit A."/>
            <person name="Konrad K.R."/>
            <person name="Hajirezaei M.-R."/>
            <person name="Gramann M."/>
            <person name="Hedrich R."/>
            <person name="Sauer N."/>
        </authorList>
    </citation>
    <scope>NUCLEOTIDE SEQUENCE [MRNA] (ISOFORM 1)</scope>
</reference>
<reference key="2">
    <citation type="journal article" date="2007" name="Plant Physiol.">
        <title>Arabidopsis INOSITOL TRANSPORTER2 mediates H+ symport of different inositol epimers and derivatives across the plasma membrane.</title>
        <authorList>
            <person name="Schneider S."/>
            <person name="Schneidereit A."/>
            <person name="Udvardi P."/>
            <person name="Hammes U."/>
            <person name="Gramann M."/>
            <person name="Dietrich P."/>
            <person name="Sauer N."/>
        </authorList>
    </citation>
    <scope>NUCLEOTIDE SEQUENCE [MRNA] (ISOFORM 2)</scope>
    <scope>FUNCTION</scope>
    <source>
        <strain>cv. Columbia</strain>
    </source>
</reference>
<reference key="3">
    <citation type="journal article" date="1999" name="Nature">
        <title>Sequence and analysis of chromosome 2 of the plant Arabidopsis thaliana.</title>
        <authorList>
            <person name="Lin X."/>
            <person name="Kaul S."/>
            <person name="Rounsley S.D."/>
            <person name="Shea T.P."/>
            <person name="Benito M.-I."/>
            <person name="Town C.D."/>
            <person name="Fujii C.Y."/>
            <person name="Mason T.M."/>
            <person name="Bowman C.L."/>
            <person name="Barnstead M.E."/>
            <person name="Feldblyum T.V."/>
            <person name="Buell C.R."/>
            <person name="Ketchum K.A."/>
            <person name="Lee J.J."/>
            <person name="Ronning C.M."/>
            <person name="Koo H.L."/>
            <person name="Moffat K.S."/>
            <person name="Cronin L.A."/>
            <person name="Shen M."/>
            <person name="Pai G."/>
            <person name="Van Aken S."/>
            <person name="Umayam L."/>
            <person name="Tallon L.J."/>
            <person name="Gill J.E."/>
            <person name="Adams M.D."/>
            <person name="Carrera A.J."/>
            <person name="Creasy T.H."/>
            <person name="Goodman H.M."/>
            <person name="Somerville C.R."/>
            <person name="Copenhaver G.P."/>
            <person name="Preuss D."/>
            <person name="Nierman W.C."/>
            <person name="White O."/>
            <person name="Eisen J.A."/>
            <person name="Salzberg S.L."/>
            <person name="Fraser C.M."/>
            <person name="Venter J.C."/>
        </authorList>
    </citation>
    <scope>NUCLEOTIDE SEQUENCE [LARGE SCALE GENOMIC DNA]</scope>
    <source>
        <strain>cv. Columbia</strain>
    </source>
</reference>
<reference key="4">
    <citation type="journal article" date="2017" name="Plant J.">
        <title>Araport11: a complete reannotation of the Arabidopsis thaliana reference genome.</title>
        <authorList>
            <person name="Cheng C.Y."/>
            <person name="Krishnakumar V."/>
            <person name="Chan A.P."/>
            <person name="Thibaud-Nissen F."/>
            <person name="Schobel S."/>
            <person name="Town C.D."/>
        </authorList>
    </citation>
    <scope>GENOME REANNOTATION</scope>
    <source>
        <strain>cv. Columbia</strain>
    </source>
</reference>
<reference key="5">
    <citation type="journal article" date="2006" name="BMC Evol. Biol.">
        <title>The monosaccharide transporter gene family in land plants is ancient and shows differential subfamily expression and expansion across lineages.</title>
        <authorList>
            <person name="Johnson D.A."/>
            <person name="Hill J.P."/>
            <person name="Thomas M.A."/>
        </authorList>
    </citation>
    <scope>GENE FAMILY</scope>
</reference>
<accession>Q9ZQP6</accession>
<accession>A9JNR7</accession>
<organism>
    <name type="scientific">Arabidopsis thaliana</name>
    <name type="common">Mouse-ear cress</name>
    <dbReference type="NCBI Taxonomy" id="3702"/>
    <lineage>
        <taxon>Eukaryota</taxon>
        <taxon>Viridiplantae</taxon>
        <taxon>Streptophyta</taxon>
        <taxon>Embryophyta</taxon>
        <taxon>Tracheophyta</taxon>
        <taxon>Spermatophyta</taxon>
        <taxon>Magnoliopsida</taxon>
        <taxon>eudicotyledons</taxon>
        <taxon>Gunneridae</taxon>
        <taxon>Pentapetalae</taxon>
        <taxon>rosids</taxon>
        <taxon>malvids</taxon>
        <taxon>Brassicales</taxon>
        <taxon>Brassicaceae</taxon>
        <taxon>Camelineae</taxon>
        <taxon>Arabidopsis</taxon>
    </lineage>
</organism>
<name>INT3_ARATH</name>
<comment type="function">
    <text evidence="1 3">Plasma membrane inositol-proton symporter.</text>
</comment>
<comment type="subcellular location">
    <subcellularLocation>
        <location evidence="1">Membrane</location>
        <topology evidence="1">Multi-pass membrane protein</topology>
    </subcellularLocation>
</comment>
<comment type="alternative products">
    <event type="alternative splicing"/>
    <isoform>
        <id>Q9ZQP6-1</id>
        <name>1</name>
        <sequence type="displayed"/>
    </isoform>
    <isoform>
        <id>Q9ZQP6-2</id>
        <name>2</name>
        <sequence type="described" ref="VSP_043682 VSP_043683"/>
    </isoform>
</comment>
<comment type="miscellaneous">
    <molecule>Isoform 2</molecule>
    <text evidence="5">Major isoform, probably not functional. May be due to competing donor splice site.</text>
</comment>
<comment type="similarity">
    <text evidence="5">Belongs to the major facilitator superfamily. Sugar transporter (TC 2.A.1.1) family.</text>
</comment>
<feature type="chain" id="PRO_0000259877" description="Probable inositol transporter 3">
    <location>
        <begin position="1"/>
        <end position="580"/>
    </location>
</feature>
<feature type="transmembrane region" description="Helical; Name=1" evidence="2">
    <location>
        <begin position="34"/>
        <end position="54"/>
    </location>
</feature>
<feature type="transmembrane region" description="Helical; Name=2" evidence="2">
    <location>
        <begin position="69"/>
        <end position="89"/>
    </location>
</feature>
<feature type="transmembrane region" description="Helical; Name=3" evidence="2">
    <location>
        <begin position="104"/>
        <end position="124"/>
    </location>
</feature>
<feature type="transmembrane region" description="Helical; Name=4" evidence="2">
    <location>
        <begin position="127"/>
        <end position="147"/>
    </location>
</feature>
<feature type="transmembrane region" description="Helical; Name=5" evidence="2">
    <location>
        <begin position="161"/>
        <end position="181"/>
    </location>
</feature>
<feature type="transmembrane region" description="Helical; Name=6" evidence="2">
    <location>
        <begin position="187"/>
        <end position="207"/>
    </location>
</feature>
<feature type="transmembrane region" description="Helical; Name=7" evidence="2">
    <location>
        <begin position="289"/>
        <end position="309"/>
    </location>
</feature>
<feature type="transmembrane region" description="Helical; Name=8" evidence="2">
    <location>
        <begin position="316"/>
        <end position="336"/>
    </location>
</feature>
<feature type="transmembrane region" description="Helical; Name=9" evidence="2">
    <location>
        <begin position="344"/>
        <end position="364"/>
    </location>
</feature>
<feature type="transmembrane region" description="Helical; Name=10" evidence="2">
    <location>
        <begin position="455"/>
        <end position="475"/>
    </location>
</feature>
<feature type="transmembrane region" description="Helical; Name=11" evidence="2">
    <location>
        <begin position="493"/>
        <end position="513"/>
    </location>
</feature>
<feature type="transmembrane region" description="Helical; Name=12" evidence="2">
    <location>
        <begin position="524"/>
        <end position="544"/>
    </location>
</feature>
<feature type="splice variant" id="VSP_043682" description="In isoform 2." evidence="4">
    <original>PARIRGALVSTNGLLITGGQFLSYLINLAFVHTP</original>
    <variation>HTGYMEVDVGSLGDSSDHSVLPHANAARVSTVAL</variation>
    <location>
        <begin position="149"/>
        <end position="182"/>
    </location>
</feature>
<feature type="splice variant" id="VSP_043683" description="In isoform 2." evidence="4">
    <location>
        <begin position="183"/>
        <end position="580"/>
    </location>
</feature>